<feature type="chain" id="PRO_1000141131" description="Small ribosomal subunit protein uS11">
    <location>
        <begin position="1"/>
        <end position="129"/>
    </location>
</feature>
<sequence length="129" mass="13893">MAKEAVRVRRRERKNISSGVAHVNSTFNNTMITITDAQGNAIAWSSAGAKGFKGSRKSTPFAAQIAAEDCAKKAQEHGMKSLEVEVCGPGSGRESALRALQAAGFMITSIRDVTPIPHNGCRPRKKRRV</sequence>
<keyword id="KW-1185">Reference proteome</keyword>
<keyword id="KW-0687">Ribonucleoprotein</keyword>
<keyword id="KW-0689">Ribosomal protein</keyword>
<keyword id="KW-0694">RNA-binding</keyword>
<keyword id="KW-0699">rRNA-binding</keyword>
<gene>
    <name evidence="1" type="primary">rpsK</name>
    <name type="ordered locus">Rleg2_1355</name>
</gene>
<name>RS11_RHILW</name>
<dbReference type="EMBL" id="CP001191">
    <property type="protein sequence ID" value="ACI54649.1"/>
    <property type="molecule type" value="Genomic_DNA"/>
</dbReference>
<dbReference type="RefSeq" id="WP_003547577.1">
    <property type="nucleotide sequence ID" value="NC_011369.1"/>
</dbReference>
<dbReference type="SMR" id="B5ZZ56"/>
<dbReference type="STRING" id="395492.Rleg2_1355"/>
<dbReference type="GeneID" id="91148151"/>
<dbReference type="KEGG" id="rlt:Rleg2_1355"/>
<dbReference type="eggNOG" id="COG0100">
    <property type="taxonomic scope" value="Bacteria"/>
</dbReference>
<dbReference type="HOGENOM" id="CLU_072439_5_0_5"/>
<dbReference type="Proteomes" id="UP000008330">
    <property type="component" value="Chromosome"/>
</dbReference>
<dbReference type="GO" id="GO:1990904">
    <property type="term" value="C:ribonucleoprotein complex"/>
    <property type="evidence" value="ECO:0007669"/>
    <property type="project" value="UniProtKB-KW"/>
</dbReference>
<dbReference type="GO" id="GO:0005840">
    <property type="term" value="C:ribosome"/>
    <property type="evidence" value="ECO:0007669"/>
    <property type="project" value="UniProtKB-KW"/>
</dbReference>
<dbReference type="GO" id="GO:0019843">
    <property type="term" value="F:rRNA binding"/>
    <property type="evidence" value="ECO:0007669"/>
    <property type="project" value="UniProtKB-UniRule"/>
</dbReference>
<dbReference type="GO" id="GO:0003735">
    <property type="term" value="F:structural constituent of ribosome"/>
    <property type="evidence" value="ECO:0007669"/>
    <property type="project" value="InterPro"/>
</dbReference>
<dbReference type="GO" id="GO:0006412">
    <property type="term" value="P:translation"/>
    <property type="evidence" value="ECO:0007669"/>
    <property type="project" value="UniProtKB-UniRule"/>
</dbReference>
<dbReference type="FunFam" id="3.30.420.80:FF:000001">
    <property type="entry name" value="30S ribosomal protein S11"/>
    <property type="match status" value="1"/>
</dbReference>
<dbReference type="Gene3D" id="3.30.420.80">
    <property type="entry name" value="Ribosomal protein S11"/>
    <property type="match status" value="1"/>
</dbReference>
<dbReference type="HAMAP" id="MF_01310">
    <property type="entry name" value="Ribosomal_uS11"/>
    <property type="match status" value="1"/>
</dbReference>
<dbReference type="InterPro" id="IPR001971">
    <property type="entry name" value="Ribosomal_uS11"/>
</dbReference>
<dbReference type="InterPro" id="IPR019981">
    <property type="entry name" value="Ribosomal_uS11_bac-type"/>
</dbReference>
<dbReference type="InterPro" id="IPR018102">
    <property type="entry name" value="Ribosomal_uS11_CS"/>
</dbReference>
<dbReference type="InterPro" id="IPR036967">
    <property type="entry name" value="Ribosomal_uS11_sf"/>
</dbReference>
<dbReference type="NCBIfam" id="NF003698">
    <property type="entry name" value="PRK05309.1"/>
    <property type="match status" value="1"/>
</dbReference>
<dbReference type="NCBIfam" id="TIGR03632">
    <property type="entry name" value="uS11_bact"/>
    <property type="match status" value="1"/>
</dbReference>
<dbReference type="PANTHER" id="PTHR11759">
    <property type="entry name" value="40S RIBOSOMAL PROTEIN S14/30S RIBOSOMAL PROTEIN S11"/>
    <property type="match status" value="1"/>
</dbReference>
<dbReference type="Pfam" id="PF00411">
    <property type="entry name" value="Ribosomal_S11"/>
    <property type="match status" value="1"/>
</dbReference>
<dbReference type="PIRSF" id="PIRSF002131">
    <property type="entry name" value="Ribosomal_S11"/>
    <property type="match status" value="1"/>
</dbReference>
<dbReference type="SUPFAM" id="SSF53137">
    <property type="entry name" value="Translational machinery components"/>
    <property type="match status" value="1"/>
</dbReference>
<dbReference type="PROSITE" id="PS00054">
    <property type="entry name" value="RIBOSOMAL_S11"/>
    <property type="match status" value="1"/>
</dbReference>
<comment type="function">
    <text evidence="1">Located on the platform of the 30S subunit, it bridges several disparate RNA helices of the 16S rRNA. Forms part of the Shine-Dalgarno cleft in the 70S ribosome.</text>
</comment>
<comment type="subunit">
    <text evidence="1">Part of the 30S ribosomal subunit. Interacts with proteins S7 and S18. Binds to IF-3.</text>
</comment>
<comment type="similarity">
    <text evidence="1">Belongs to the universal ribosomal protein uS11 family.</text>
</comment>
<evidence type="ECO:0000255" key="1">
    <source>
        <dbReference type="HAMAP-Rule" id="MF_01310"/>
    </source>
</evidence>
<evidence type="ECO:0000305" key="2"/>
<protein>
    <recommendedName>
        <fullName evidence="1">Small ribosomal subunit protein uS11</fullName>
    </recommendedName>
    <alternativeName>
        <fullName evidence="2">30S ribosomal protein S11</fullName>
    </alternativeName>
</protein>
<proteinExistence type="inferred from homology"/>
<reference key="1">
    <citation type="journal article" date="2010" name="Stand. Genomic Sci.">
        <title>Complete genome sequence of Rhizobium leguminosarum bv trifolii strain WSM2304, an effective microsymbiont of the South American clover Trifolium polymorphum.</title>
        <authorList>
            <person name="Reeve W."/>
            <person name="O'Hara G."/>
            <person name="Chain P."/>
            <person name="Ardley J."/>
            <person name="Brau L."/>
            <person name="Nandesena K."/>
            <person name="Tiwari R."/>
            <person name="Malfatti S."/>
            <person name="Kiss H."/>
            <person name="Lapidus A."/>
            <person name="Copeland A."/>
            <person name="Nolan M."/>
            <person name="Land M."/>
            <person name="Ivanova N."/>
            <person name="Mavromatis K."/>
            <person name="Markowitz V."/>
            <person name="Kyrpides N."/>
            <person name="Melino V."/>
            <person name="Denton M."/>
            <person name="Yates R."/>
            <person name="Howieson J."/>
        </authorList>
    </citation>
    <scope>NUCLEOTIDE SEQUENCE [LARGE SCALE GENOMIC DNA]</scope>
    <source>
        <strain>WSM2304</strain>
    </source>
</reference>
<organism>
    <name type="scientific">Rhizobium leguminosarum bv. trifolii (strain WSM2304)</name>
    <dbReference type="NCBI Taxonomy" id="395492"/>
    <lineage>
        <taxon>Bacteria</taxon>
        <taxon>Pseudomonadati</taxon>
        <taxon>Pseudomonadota</taxon>
        <taxon>Alphaproteobacteria</taxon>
        <taxon>Hyphomicrobiales</taxon>
        <taxon>Rhizobiaceae</taxon>
        <taxon>Rhizobium/Agrobacterium group</taxon>
        <taxon>Rhizobium</taxon>
    </lineage>
</organism>
<accession>B5ZZ56</accession>